<protein>
    <recommendedName>
        <fullName>GATA zinc finger domain-containing protein 22</fullName>
    </recommendedName>
</protein>
<sequence length="181" mass="21046">MNNNILVFDQVSNLNEPPNILLLSEEDHRVAKNAEIFIDKMITNLKFLSNSNSCDSSKKRKMIEQKTKCSNPRKNCGAKKLKTSPLPQPMTNLSHNHMFSIDEKPKRGRPPKPKPLCCQICLTNNTPYWRWSVIENNKIRVCNRCGQKIFKLEKSINEQLLFRIEIINLLNKIDDEKPIEK</sequence>
<reference key="1">
    <citation type="journal article" date="2005" name="Nature">
        <title>The genome of the social amoeba Dictyostelium discoideum.</title>
        <authorList>
            <person name="Eichinger L."/>
            <person name="Pachebat J.A."/>
            <person name="Gloeckner G."/>
            <person name="Rajandream M.A."/>
            <person name="Sucgang R."/>
            <person name="Berriman M."/>
            <person name="Song J."/>
            <person name="Olsen R."/>
            <person name="Szafranski K."/>
            <person name="Xu Q."/>
            <person name="Tunggal B."/>
            <person name="Kummerfeld S."/>
            <person name="Madera M."/>
            <person name="Konfortov B.A."/>
            <person name="Rivero F."/>
            <person name="Bankier A.T."/>
            <person name="Lehmann R."/>
            <person name="Hamlin N."/>
            <person name="Davies R."/>
            <person name="Gaudet P."/>
            <person name="Fey P."/>
            <person name="Pilcher K."/>
            <person name="Chen G."/>
            <person name="Saunders D."/>
            <person name="Sodergren E.J."/>
            <person name="Davis P."/>
            <person name="Kerhornou A."/>
            <person name="Nie X."/>
            <person name="Hall N."/>
            <person name="Anjard C."/>
            <person name="Hemphill L."/>
            <person name="Bason N."/>
            <person name="Farbrother P."/>
            <person name="Desany B."/>
            <person name="Just E."/>
            <person name="Morio T."/>
            <person name="Rost R."/>
            <person name="Churcher C.M."/>
            <person name="Cooper J."/>
            <person name="Haydock S."/>
            <person name="van Driessche N."/>
            <person name="Cronin A."/>
            <person name="Goodhead I."/>
            <person name="Muzny D.M."/>
            <person name="Mourier T."/>
            <person name="Pain A."/>
            <person name="Lu M."/>
            <person name="Harper D."/>
            <person name="Lindsay R."/>
            <person name="Hauser H."/>
            <person name="James K.D."/>
            <person name="Quiles M."/>
            <person name="Madan Babu M."/>
            <person name="Saito T."/>
            <person name="Buchrieser C."/>
            <person name="Wardroper A."/>
            <person name="Felder M."/>
            <person name="Thangavelu M."/>
            <person name="Johnson D."/>
            <person name="Knights A."/>
            <person name="Loulseged H."/>
            <person name="Mungall K.L."/>
            <person name="Oliver K."/>
            <person name="Price C."/>
            <person name="Quail M.A."/>
            <person name="Urushihara H."/>
            <person name="Hernandez J."/>
            <person name="Rabbinowitsch E."/>
            <person name="Steffen D."/>
            <person name="Sanders M."/>
            <person name="Ma J."/>
            <person name="Kohara Y."/>
            <person name="Sharp S."/>
            <person name="Simmonds M.N."/>
            <person name="Spiegler S."/>
            <person name="Tivey A."/>
            <person name="Sugano S."/>
            <person name="White B."/>
            <person name="Walker D."/>
            <person name="Woodward J.R."/>
            <person name="Winckler T."/>
            <person name="Tanaka Y."/>
            <person name="Shaulsky G."/>
            <person name="Schleicher M."/>
            <person name="Weinstock G.M."/>
            <person name="Rosenthal A."/>
            <person name="Cox E.C."/>
            <person name="Chisholm R.L."/>
            <person name="Gibbs R.A."/>
            <person name="Loomis W.F."/>
            <person name="Platzer M."/>
            <person name="Kay R.R."/>
            <person name="Williams J.G."/>
            <person name="Dear P.H."/>
            <person name="Noegel A.A."/>
            <person name="Barrell B.G."/>
            <person name="Kuspa A."/>
        </authorList>
    </citation>
    <scope>NUCLEOTIDE SEQUENCE [LARGE SCALE GENOMIC DNA]</scope>
    <source>
        <strain>AX4</strain>
    </source>
</reference>
<feature type="chain" id="PRO_0000330455" description="GATA zinc finger domain-containing protein 22">
    <location>
        <begin position="1"/>
        <end position="181"/>
    </location>
</feature>
<feature type="zinc finger region" description="GATA-type">
    <location>
        <begin position="118"/>
        <end position="145"/>
    </location>
</feature>
<accession>Q54UG8</accession>
<keyword id="KW-0479">Metal-binding</keyword>
<keyword id="KW-1185">Reference proteome</keyword>
<keyword id="KW-0862">Zinc</keyword>
<keyword id="KW-0863">Zinc-finger</keyword>
<gene>
    <name type="primary">gtaV</name>
    <name type="ORF">DDB_G0281087</name>
</gene>
<dbReference type="EMBL" id="AAFI02000040">
    <property type="protein sequence ID" value="EAL66840.2"/>
    <property type="molecule type" value="Genomic_DNA"/>
</dbReference>
<dbReference type="RefSeq" id="XP_640808.2">
    <property type="nucleotide sequence ID" value="XM_635716.2"/>
</dbReference>
<dbReference type="PaxDb" id="44689-DDB0233425"/>
<dbReference type="EnsemblProtists" id="EAL66840">
    <property type="protein sequence ID" value="EAL66840"/>
    <property type="gene ID" value="DDB_G0281087"/>
</dbReference>
<dbReference type="GeneID" id="8622862"/>
<dbReference type="KEGG" id="ddi:DDB_G0281087"/>
<dbReference type="dictyBase" id="DDB_G0281087">
    <property type="gene designation" value="gtaV"/>
</dbReference>
<dbReference type="VEuPathDB" id="AmoebaDB:DDB_G0281087"/>
<dbReference type="HOGENOM" id="CLU_1491706_0_0_1"/>
<dbReference type="InParanoid" id="Q54UG8"/>
<dbReference type="PRO" id="PR:Q54UG8"/>
<dbReference type="Proteomes" id="UP000002195">
    <property type="component" value="Chromosome 3"/>
</dbReference>
<dbReference type="GO" id="GO:0008270">
    <property type="term" value="F:zinc ion binding"/>
    <property type="evidence" value="ECO:0007669"/>
    <property type="project" value="UniProtKB-KW"/>
</dbReference>
<dbReference type="GO" id="GO:0006355">
    <property type="term" value="P:regulation of DNA-templated transcription"/>
    <property type="evidence" value="ECO:0007669"/>
    <property type="project" value="InterPro"/>
</dbReference>
<dbReference type="Gene3D" id="3.30.50.10">
    <property type="entry name" value="Erythroid Transcription Factor GATA-1, subunit A"/>
    <property type="match status" value="1"/>
</dbReference>
<dbReference type="InterPro" id="IPR013088">
    <property type="entry name" value="Znf_NHR/GATA"/>
</dbReference>
<dbReference type="SUPFAM" id="SSF57716">
    <property type="entry name" value="Glucocorticoid receptor-like (DNA-binding domain)"/>
    <property type="match status" value="1"/>
</dbReference>
<proteinExistence type="predicted"/>
<name>GTAV_DICDI</name>
<organism>
    <name type="scientific">Dictyostelium discoideum</name>
    <name type="common">Social amoeba</name>
    <dbReference type="NCBI Taxonomy" id="44689"/>
    <lineage>
        <taxon>Eukaryota</taxon>
        <taxon>Amoebozoa</taxon>
        <taxon>Evosea</taxon>
        <taxon>Eumycetozoa</taxon>
        <taxon>Dictyostelia</taxon>
        <taxon>Dictyosteliales</taxon>
        <taxon>Dictyosteliaceae</taxon>
        <taxon>Dictyostelium</taxon>
    </lineage>
</organism>